<feature type="chain" id="PRO_0000299784" description="Putative UPF0479 protein YDR545C-A">
    <location>
        <begin position="1"/>
        <end position="159"/>
    </location>
</feature>
<feature type="transmembrane region" description="Helical" evidence="1">
    <location>
        <begin position="38"/>
        <end position="58"/>
    </location>
</feature>
<feature type="transmembrane region" description="Helical" evidence="1">
    <location>
        <begin position="135"/>
        <end position="155"/>
    </location>
</feature>
<proteinExistence type="uncertain"/>
<comment type="subcellular location">
    <subcellularLocation>
        <location evidence="2">Membrane</location>
        <topology evidence="2">Multi-pass membrane protein</topology>
    </subcellularLocation>
</comment>
<comment type="miscellaneous">
    <text evidence="2">Completely overlaps YRF1-1.</text>
</comment>
<comment type="similarity">
    <text evidence="2">Belongs to the UPF0479 family.</text>
</comment>
<comment type="caution">
    <text evidence="3">Product of a dubious gene prediction unlikely to encode a functional protein. Because of that it is not part of the S.cerevisiae S288c complete/reference proteome set.</text>
</comment>
<organism>
    <name type="scientific">Saccharomyces cerevisiae (strain ATCC 204508 / S288c)</name>
    <name type="common">Baker's yeast</name>
    <dbReference type="NCBI Taxonomy" id="559292"/>
    <lineage>
        <taxon>Eukaryota</taxon>
        <taxon>Fungi</taxon>
        <taxon>Dikarya</taxon>
        <taxon>Ascomycota</taxon>
        <taxon>Saccharomycotina</taxon>
        <taxon>Saccharomycetes</taxon>
        <taxon>Saccharomycetales</taxon>
        <taxon>Saccharomycetaceae</taxon>
        <taxon>Saccharomyces</taxon>
    </lineage>
</organism>
<reference key="1">
    <citation type="journal article" date="1997" name="Nature">
        <title>The nucleotide sequence of Saccharomyces cerevisiae chromosome IV.</title>
        <authorList>
            <person name="Jacq C."/>
            <person name="Alt-Moerbe J."/>
            <person name="Andre B."/>
            <person name="Arnold W."/>
            <person name="Bahr A."/>
            <person name="Ballesta J.P.G."/>
            <person name="Bargues M."/>
            <person name="Baron L."/>
            <person name="Becker A."/>
            <person name="Biteau N."/>
            <person name="Bloecker H."/>
            <person name="Blugeon C."/>
            <person name="Boskovic J."/>
            <person name="Brandt P."/>
            <person name="Brueckner M."/>
            <person name="Buitrago M.J."/>
            <person name="Coster F."/>
            <person name="Delaveau T."/>
            <person name="del Rey F."/>
            <person name="Dujon B."/>
            <person name="Eide L.G."/>
            <person name="Garcia-Cantalejo J.M."/>
            <person name="Goffeau A."/>
            <person name="Gomez-Peris A."/>
            <person name="Granotier C."/>
            <person name="Hanemann V."/>
            <person name="Hankeln T."/>
            <person name="Hoheisel J.D."/>
            <person name="Jaeger W."/>
            <person name="Jimenez A."/>
            <person name="Jonniaux J.-L."/>
            <person name="Kraemer C."/>
            <person name="Kuester H."/>
            <person name="Laamanen P."/>
            <person name="Legros Y."/>
            <person name="Louis E.J."/>
            <person name="Moeller-Rieker S."/>
            <person name="Monnet A."/>
            <person name="Moro M."/>
            <person name="Mueller-Auer S."/>
            <person name="Nussbaumer B."/>
            <person name="Paricio N."/>
            <person name="Paulin L."/>
            <person name="Perea J."/>
            <person name="Perez-Alonso M."/>
            <person name="Perez-Ortin J.E."/>
            <person name="Pohl T.M."/>
            <person name="Prydz H."/>
            <person name="Purnelle B."/>
            <person name="Rasmussen S.W."/>
            <person name="Remacha M.A."/>
            <person name="Revuelta J.L."/>
            <person name="Rieger M."/>
            <person name="Salom D."/>
            <person name="Saluz H.P."/>
            <person name="Saiz J.E."/>
            <person name="Saren A.-M."/>
            <person name="Schaefer M."/>
            <person name="Scharfe M."/>
            <person name="Schmidt E.R."/>
            <person name="Schneider C."/>
            <person name="Scholler P."/>
            <person name="Schwarz S."/>
            <person name="Soler-Mira A."/>
            <person name="Urrestarazu L.A."/>
            <person name="Verhasselt P."/>
            <person name="Vissers S."/>
            <person name="Voet M."/>
            <person name="Volckaert G."/>
            <person name="Wagner G."/>
            <person name="Wambutt R."/>
            <person name="Wedler E."/>
            <person name="Wedler H."/>
            <person name="Woelfl S."/>
            <person name="Harris D.E."/>
            <person name="Bowman S."/>
            <person name="Brown D."/>
            <person name="Churcher C.M."/>
            <person name="Connor R."/>
            <person name="Dedman K."/>
            <person name="Gentles S."/>
            <person name="Hamlin N."/>
            <person name="Hunt S."/>
            <person name="Jones L."/>
            <person name="McDonald S."/>
            <person name="Murphy L.D."/>
            <person name="Niblett D."/>
            <person name="Odell C."/>
            <person name="Oliver K."/>
            <person name="Rajandream M.A."/>
            <person name="Richards C."/>
            <person name="Shore L."/>
            <person name="Walsh S.V."/>
            <person name="Barrell B.G."/>
            <person name="Dietrich F.S."/>
            <person name="Mulligan J.T."/>
            <person name="Allen E."/>
            <person name="Araujo R."/>
            <person name="Aviles E."/>
            <person name="Berno A."/>
            <person name="Carpenter J."/>
            <person name="Chen E."/>
            <person name="Cherry J.M."/>
            <person name="Chung E."/>
            <person name="Duncan M."/>
            <person name="Hunicke-Smith S."/>
            <person name="Hyman R.W."/>
            <person name="Komp C."/>
            <person name="Lashkari D."/>
            <person name="Lew H."/>
            <person name="Lin D."/>
            <person name="Mosedale D."/>
            <person name="Nakahara K."/>
            <person name="Namath A."/>
            <person name="Oefner P."/>
            <person name="Oh C."/>
            <person name="Petel F.X."/>
            <person name="Roberts D."/>
            <person name="Schramm S."/>
            <person name="Schroeder M."/>
            <person name="Shogren T."/>
            <person name="Shroff N."/>
            <person name="Winant A."/>
            <person name="Yelton M.A."/>
            <person name="Botstein D."/>
            <person name="Davis R.W."/>
            <person name="Johnston M."/>
            <person name="Andrews S."/>
            <person name="Brinkman R."/>
            <person name="Cooper J."/>
            <person name="Ding H."/>
            <person name="Du Z."/>
            <person name="Favello A."/>
            <person name="Fulton L."/>
            <person name="Gattung S."/>
            <person name="Greco T."/>
            <person name="Hallsworth K."/>
            <person name="Hawkins J."/>
            <person name="Hillier L.W."/>
            <person name="Jier M."/>
            <person name="Johnson D."/>
            <person name="Johnston L."/>
            <person name="Kirsten J."/>
            <person name="Kucaba T."/>
            <person name="Langston Y."/>
            <person name="Latreille P."/>
            <person name="Le T."/>
            <person name="Mardis E."/>
            <person name="Menezes S."/>
            <person name="Miller N."/>
            <person name="Nhan M."/>
            <person name="Pauley A."/>
            <person name="Peluso D."/>
            <person name="Rifkin L."/>
            <person name="Riles L."/>
            <person name="Taich A."/>
            <person name="Trevaskis E."/>
            <person name="Vignati D."/>
            <person name="Wilcox L."/>
            <person name="Wohldman P."/>
            <person name="Vaudin M."/>
            <person name="Wilson R."/>
            <person name="Waterston R."/>
            <person name="Albermann K."/>
            <person name="Hani J."/>
            <person name="Heumann K."/>
            <person name="Kleine K."/>
            <person name="Mewes H.-W."/>
            <person name="Zollner A."/>
            <person name="Zaccaria P."/>
        </authorList>
    </citation>
    <scope>NUCLEOTIDE SEQUENCE [LARGE SCALE GENOMIC DNA]</scope>
    <source>
        <strain>ATCC 204508 / S288c</strain>
    </source>
</reference>
<reference key="2">
    <citation type="journal article" date="2014" name="G3 (Bethesda)">
        <title>The reference genome sequence of Saccharomyces cerevisiae: Then and now.</title>
        <authorList>
            <person name="Engel S.R."/>
            <person name="Dietrich F.S."/>
            <person name="Fisk D.G."/>
            <person name="Binkley G."/>
            <person name="Balakrishnan R."/>
            <person name="Costanzo M.C."/>
            <person name="Dwight S.S."/>
            <person name="Hitz B.C."/>
            <person name="Karra K."/>
            <person name="Nash R.S."/>
            <person name="Weng S."/>
            <person name="Wong E.D."/>
            <person name="Lloyd P."/>
            <person name="Skrzypek M.S."/>
            <person name="Miyasato S.R."/>
            <person name="Simison M."/>
            <person name="Cherry J.M."/>
        </authorList>
    </citation>
    <scope>GENOME REANNOTATION</scope>
    <source>
        <strain>ATCC 204508 / S288c</strain>
    </source>
</reference>
<reference key="3">
    <citation type="journal article" date="2002" name="Nat. Biotechnol.">
        <title>An integrated approach for finding overlooked genes in yeast.</title>
        <authorList>
            <person name="Kumar A."/>
            <person name="Harrison P.M."/>
            <person name="Cheung K.-H."/>
            <person name="Lan N."/>
            <person name="Echols N."/>
            <person name="Bertone P."/>
            <person name="Miller P."/>
            <person name="Gerstein M.B."/>
            <person name="Snyder M."/>
        </authorList>
    </citation>
    <scope>NUCLEOTIDE SEQUENCE [GENOMIC DNA]</scope>
</reference>
<name>YD545_YEAST</name>
<keyword id="KW-0472">Membrane</keyword>
<keyword id="KW-0812">Transmembrane</keyword>
<keyword id="KW-1133">Transmembrane helix</keyword>
<sequence>MPAKLQLDVLRTLQSSARHGTQTLKNSNFLERFHKDRIVFCLPFFPALFLVPVQKVLQHLCLRFTQVAPYFIIQLFDLPSRHAENLAPLLASCRIQYTNCFSSSSNGQVPSIISLYLRVDLSPFYAKIFQISYRVPMIWLDVFQVFFVFLVISQHSLHS</sequence>
<gene>
    <name type="ordered locus">YDR545C-A</name>
</gene>
<evidence type="ECO:0000255" key="1"/>
<evidence type="ECO:0000305" key="2"/>
<evidence type="ECO:0000305" key="3">
    <source>
    </source>
</evidence>
<protein>
    <recommendedName>
        <fullName>Putative UPF0479 protein YDR545C-A</fullName>
    </recommendedName>
</protein>
<accession>P0CL37</accession>
<accession>Q8TF92</accession>
<accession>Q8TGK3</accession>
<dbReference type="EMBL" id="Z74389">
    <property type="status" value="NOT_ANNOTATED_CDS"/>
    <property type="molecule type" value="Genomic_DNA"/>
</dbReference>
<dbReference type="EMBL" id="AF479990">
    <property type="protein sequence ID" value="AAL79303.1"/>
    <property type="molecule type" value="Genomic_DNA"/>
</dbReference>
<dbReference type="STRING" id="4932.YDR545C-A"/>
<dbReference type="PaxDb" id="4932-YDR545C-A"/>
<dbReference type="EnsemblFungi" id="YDR545C-A_mRNA">
    <property type="protein sequence ID" value="YDR545C-A"/>
    <property type="gene ID" value="YDR545C-A"/>
</dbReference>
<dbReference type="AGR" id="SGD:S000028617"/>
<dbReference type="SGD" id="S000028617">
    <property type="gene designation" value="YDR545C-A"/>
</dbReference>
<dbReference type="GeneTree" id="ENSGT01130000278822"/>
<dbReference type="HOGENOM" id="CLU_139933_0_0_1"/>
<dbReference type="GO" id="GO:0016020">
    <property type="term" value="C:membrane"/>
    <property type="evidence" value="ECO:0007669"/>
    <property type="project" value="UniProtKB-SubCell"/>
</dbReference>